<keyword id="KW-0249">Electron transport</keyword>
<keyword id="KW-0349">Heme</keyword>
<keyword id="KW-0408">Iron</keyword>
<keyword id="KW-0479">Metal-binding</keyword>
<keyword id="KW-0496">Mitochondrion</keyword>
<keyword id="KW-0679">Respiratory chain</keyword>
<keyword id="KW-0813">Transport</keyword>
<gene>
    <name type="primary">CYTC</name>
</gene>
<evidence type="ECO:0000250" key="1"/>
<evidence type="ECO:0000255" key="2">
    <source>
        <dbReference type="PROSITE-ProRule" id="PRU00433"/>
    </source>
</evidence>
<evidence type="ECO:0000305" key="3"/>
<dbReference type="EMBL" id="AB085853">
    <property type="protein sequence ID" value="BAC54258.1"/>
    <property type="molecule type" value="Genomic_DNA"/>
</dbReference>
<dbReference type="SMR" id="P59218"/>
<dbReference type="OMA" id="KARCAQC"/>
<dbReference type="OrthoDB" id="449280at2759"/>
<dbReference type="GO" id="GO:0005758">
    <property type="term" value="C:mitochondrial intermembrane space"/>
    <property type="evidence" value="ECO:0007669"/>
    <property type="project" value="UniProtKB-SubCell"/>
</dbReference>
<dbReference type="GO" id="GO:0009055">
    <property type="term" value="F:electron transfer activity"/>
    <property type="evidence" value="ECO:0007669"/>
    <property type="project" value="InterPro"/>
</dbReference>
<dbReference type="GO" id="GO:0020037">
    <property type="term" value="F:heme binding"/>
    <property type="evidence" value="ECO:0007669"/>
    <property type="project" value="InterPro"/>
</dbReference>
<dbReference type="GO" id="GO:0046872">
    <property type="term" value="F:metal ion binding"/>
    <property type="evidence" value="ECO:0007669"/>
    <property type="project" value="UniProtKB-KW"/>
</dbReference>
<dbReference type="FunFam" id="1.10.760.10:FF:000001">
    <property type="entry name" value="Cytochrome c iso-1"/>
    <property type="match status" value="1"/>
</dbReference>
<dbReference type="Gene3D" id="1.10.760.10">
    <property type="entry name" value="Cytochrome c-like domain"/>
    <property type="match status" value="1"/>
</dbReference>
<dbReference type="InterPro" id="IPR009056">
    <property type="entry name" value="Cyt_c-like_dom"/>
</dbReference>
<dbReference type="InterPro" id="IPR036909">
    <property type="entry name" value="Cyt_c-like_dom_sf"/>
</dbReference>
<dbReference type="InterPro" id="IPR002327">
    <property type="entry name" value="Cyt_c_1A/1B"/>
</dbReference>
<dbReference type="PANTHER" id="PTHR11961">
    <property type="entry name" value="CYTOCHROME C"/>
    <property type="match status" value="1"/>
</dbReference>
<dbReference type="Pfam" id="PF00034">
    <property type="entry name" value="Cytochrom_C"/>
    <property type="match status" value="1"/>
</dbReference>
<dbReference type="PRINTS" id="PR00604">
    <property type="entry name" value="CYTCHRMECIAB"/>
</dbReference>
<dbReference type="SUPFAM" id="SSF46626">
    <property type="entry name" value="Cytochrome c"/>
    <property type="match status" value="1"/>
</dbReference>
<dbReference type="PROSITE" id="PS51007">
    <property type="entry name" value="CYTC"/>
    <property type="match status" value="1"/>
</dbReference>
<sequence length="108" mass="11984">MGFSAGDLKKGEKLFTTRCAQCHTLKEGEGNKVGPALHGLFGRKTGSVEGYAYTDANKQKGIEWTEDTLFTYLENPKKYIPGTKMAFGGLKKDKDRNDLISYLKKETA</sequence>
<protein>
    <recommendedName>
        <fullName>Cytochrome c</fullName>
    </recommendedName>
</protein>
<feature type="chain" id="PRO_0000108332" description="Cytochrome c">
    <location>
        <begin position="1"/>
        <end position="108"/>
    </location>
</feature>
<feature type="binding site" description="covalent" evidence="2">
    <location>
        <position position="19"/>
    </location>
    <ligand>
        <name>heme c</name>
        <dbReference type="ChEBI" id="CHEBI:61717"/>
    </ligand>
</feature>
<feature type="binding site" description="covalent" evidence="2">
    <location>
        <position position="22"/>
    </location>
    <ligand>
        <name>heme c</name>
        <dbReference type="ChEBI" id="CHEBI:61717"/>
    </ligand>
</feature>
<feature type="binding site" description="axial binding residue" evidence="2">
    <location>
        <position position="23"/>
    </location>
    <ligand>
        <name>heme c</name>
        <dbReference type="ChEBI" id="CHEBI:61717"/>
    </ligand>
    <ligandPart>
        <name>Fe</name>
        <dbReference type="ChEBI" id="CHEBI:18248"/>
    </ligandPart>
</feature>
<feature type="binding site" description="axial binding residue" evidence="2">
    <location>
        <position position="85"/>
    </location>
    <ligand>
        <name>heme c</name>
        <dbReference type="ChEBI" id="CHEBI:61717"/>
    </ligand>
    <ligandPart>
        <name>Fe</name>
        <dbReference type="ChEBI" id="CHEBI:18248"/>
    </ligandPart>
</feature>
<reference key="1">
    <citation type="journal article" date="2003" name="Biosci. Biotechnol. Biochem.">
        <title>Primary structure of cytochrome c gene from the white root rot fungus Rosellinia necatrix.</title>
        <authorList>
            <person name="Aimi T."/>
            <person name="Taguchi H."/>
            <person name="Morinaga T."/>
        </authorList>
    </citation>
    <scope>NUCLEOTIDE SEQUENCE [GENOMIC DNA]</scope>
    <source>
        <strain>W20</strain>
    </source>
</reference>
<comment type="function">
    <text evidence="1">Electron carrier protein. The oxidized form of the cytochrome c heme group can accept an electron from the heme group of the cytochrome c1 subunit of cytochrome reductase. Cytochrome c then transfers this electron to the cytochrome oxidase complex, the final protein carrier in the mitochondrial electron-transport chain (By similarity).</text>
</comment>
<comment type="subcellular location">
    <subcellularLocation>
        <location evidence="1">Mitochondrion intermembrane space</location>
    </subcellularLocation>
    <text evidence="1">Loosely associated with the inner membrane.</text>
</comment>
<comment type="PTM">
    <text evidence="1">Binds 1 heme c group covalently per subunit.</text>
</comment>
<comment type="similarity">
    <text evidence="3">Belongs to the cytochrome c family.</text>
</comment>
<comment type="online information" name="Protein Spotlight">
    <link uri="https://www.proteinspotlight.org/back_issues/076"/>
    <text>Life shuttle - Issue 76 of November 2006</text>
</comment>
<organism>
    <name type="scientific">Rosellinia necatrix</name>
    <name type="common">White root-rot fungus</name>
    <dbReference type="NCBI Taxonomy" id="77044"/>
    <lineage>
        <taxon>Eukaryota</taxon>
        <taxon>Fungi</taxon>
        <taxon>Dikarya</taxon>
        <taxon>Ascomycota</taxon>
        <taxon>Pezizomycotina</taxon>
        <taxon>Sordariomycetes</taxon>
        <taxon>Xylariomycetidae</taxon>
        <taxon>Xylariales</taxon>
        <taxon>Xylariaceae</taxon>
        <taxon>Rosellinia</taxon>
    </lineage>
</organism>
<proteinExistence type="inferred from homology"/>
<accession>P59218</accession>
<name>CYC_ROSNE</name>